<evidence type="ECO:0000255" key="1">
    <source>
        <dbReference type="HAMAP-Rule" id="MF_00767"/>
    </source>
</evidence>
<dbReference type="EC" id="3.5.1.96" evidence="1"/>
<dbReference type="EMBL" id="CP000681">
    <property type="protein sequence ID" value="ABP75607.1"/>
    <property type="molecule type" value="Genomic_DNA"/>
</dbReference>
<dbReference type="SMR" id="A4Y6M4"/>
<dbReference type="STRING" id="319224.Sputcn32_1884"/>
<dbReference type="KEGG" id="spc:Sputcn32_1884"/>
<dbReference type="eggNOG" id="COG2988">
    <property type="taxonomic scope" value="Bacteria"/>
</dbReference>
<dbReference type="HOGENOM" id="CLU_071608_0_0_6"/>
<dbReference type="UniPathway" id="UPA00185">
    <property type="reaction ID" value="UER00283"/>
</dbReference>
<dbReference type="GO" id="GO:0016788">
    <property type="term" value="F:hydrolase activity, acting on ester bonds"/>
    <property type="evidence" value="ECO:0007669"/>
    <property type="project" value="UniProtKB-UniRule"/>
</dbReference>
<dbReference type="GO" id="GO:0009017">
    <property type="term" value="F:succinylglutamate desuccinylase activity"/>
    <property type="evidence" value="ECO:0007669"/>
    <property type="project" value="UniProtKB-EC"/>
</dbReference>
<dbReference type="GO" id="GO:0008270">
    <property type="term" value="F:zinc ion binding"/>
    <property type="evidence" value="ECO:0007669"/>
    <property type="project" value="UniProtKB-UniRule"/>
</dbReference>
<dbReference type="GO" id="GO:0019544">
    <property type="term" value="P:arginine catabolic process to glutamate"/>
    <property type="evidence" value="ECO:0007669"/>
    <property type="project" value="UniProtKB-UniRule"/>
</dbReference>
<dbReference type="GO" id="GO:0019545">
    <property type="term" value="P:arginine catabolic process to succinate"/>
    <property type="evidence" value="ECO:0007669"/>
    <property type="project" value="UniProtKB-UniRule"/>
</dbReference>
<dbReference type="CDD" id="cd03855">
    <property type="entry name" value="M14_ASTE"/>
    <property type="match status" value="1"/>
</dbReference>
<dbReference type="Gene3D" id="3.40.630.10">
    <property type="entry name" value="Zn peptidases"/>
    <property type="match status" value="1"/>
</dbReference>
<dbReference type="HAMAP" id="MF_00767">
    <property type="entry name" value="Arg_catab_AstE"/>
    <property type="match status" value="1"/>
</dbReference>
<dbReference type="InterPro" id="IPR050178">
    <property type="entry name" value="AspA/AstE_fam"/>
</dbReference>
<dbReference type="InterPro" id="IPR055438">
    <property type="entry name" value="AstE_AspA_cat"/>
</dbReference>
<dbReference type="InterPro" id="IPR007036">
    <property type="entry name" value="Aste_AspA_hybrid_dom"/>
</dbReference>
<dbReference type="InterPro" id="IPR016681">
    <property type="entry name" value="SuccinylGlu_desuccinylase"/>
</dbReference>
<dbReference type="NCBIfam" id="TIGR03242">
    <property type="entry name" value="arg_catab_astE"/>
    <property type="match status" value="1"/>
</dbReference>
<dbReference type="NCBIfam" id="NF003706">
    <property type="entry name" value="PRK05324.1"/>
    <property type="match status" value="1"/>
</dbReference>
<dbReference type="PANTHER" id="PTHR15162">
    <property type="entry name" value="ASPARTOACYLASE"/>
    <property type="match status" value="1"/>
</dbReference>
<dbReference type="PANTHER" id="PTHR15162:SF7">
    <property type="entry name" value="SUCCINYLGLUTAMATE DESUCCINYLASE"/>
    <property type="match status" value="1"/>
</dbReference>
<dbReference type="Pfam" id="PF24827">
    <property type="entry name" value="AstE_AspA_cat"/>
    <property type="match status" value="1"/>
</dbReference>
<dbReference type="Pfam" id="PF04952">
    <property type="entry name" value="AstE_AspA_hybrid"/>
    <property type="match status" value="1"/>
</dbReference>
<dbReference type="PIRSF" id="PIRSF017020">
    <property type="entry name" value="AstE"/>
    <property type="match status" value="1"/>
</dbReference>
<dbReference type="SUPFAM" id="SSF53187">
    <property type="entry name" value="Zn-dependent exopeptidases"/>
    <property type="match status" value="1"/>
</dbReference>
<organism>
    <name type="scientific">Shewanella putrefaciens (strain CN-32 / ATCC BAA-453)</name>
    <dbReference type="NCBI Taxonomy" id="319224"/>
    <lineage>
        <taxon>Bacteria</taxon>
        <taxon>Pseudomonadati</taxon>
        <taxon>Pseudomonadota</taxon>
        <taxon>Gammaproteobacteria</taxon>
        <taxon>Alteromonadales</taxon>
        <taxon>Shewanellaceae</taxon>
        <taxon>Shewanella</taxon>
    </lineage>
</organism>
<accession>A4Y6M4</accession>
<gene>
    <name evidence="1" type="primary">astE</name>
    <name type="ordered locus">Sputcn32_1884</name>
</gene>
<keyword id="KW-0056">Arginine metabolism</keyword>
<keyword id="KW-0378">Hydrolase</keyword>
<keyword id="KW-0479">Metal-binding</keyword>
<keyword id="KW-0862">Zinc</keyword>
<sequence length="344" mass="38925">MLQALLDSKDFLALTLAHPEQFDGEFSFNLGDHTQVEVWDTGVIVFEPIQNEGKDIVLSCGVHGNETAPIELCNSLIKQLLQQKIIAKQRTLFLIGNPLAINNGTRIIDENMNRLFSGEHSNPPGLVNPERVRAKKLEAYVDRFFTAAADGRQRIHYDLHTAMRASKHEKFAIYPYRPGRAFSGEQIMFLAASGVDTVLFHHEPTTTFSYFSSERYGADAFTIELGKVYPMGQNDMTRFIATHEMFMRLITAKPLELDAFDADKVNLYQVCRVINKHFDDFEFTFATDVENFRSFPKGFVLAREGGQEIKVEHEFESVVFPNAKVPIGNRTVICLIPAVNADVR</sequence>
<feature type="chain" id="PRO_1000017329" description="Succinylglutamate desuccinylase">
    <location>
        <begin position="1"/>
        <end position="344"/>
    </location>
</feature>
<feature type="active site" evidence="1">
    <location>
        <position position="224"/>
    </location>
</feature>
<feature type="binding site" evidence="1">
    <location>
        <position position="63"/>
    </location>
    <ligand>
        <name>Zn(2+)</name>
        <dbReference type="ChEBI" id="CHEBI:29105"/>
    </ligand>
</feature>
<feature type="binding site" evidence="1">
    <location>
        <position position="66"/>
    </location>
    <ligand>
        <name>Zn(2+)</name>
        <dbReference type="ChEBI" id="CHEBI:29105"/>
    </ligand>
</feature>
<feature type="binding site" evidence="1">
    <location>
        <position position="160"/>
    </location>
    <ligand>
        <name>Zn(2+)</name>
        <dbReference type="ChEBI" id="CHEBI:29105"/>
    </ligand>
</feature>
<protein>
    <recommendedName>
        <fullName evidence="1">Succinylglutamate desuccinylase</fullName>
        <ecNumber evidence="1">3.5.1.96</ecNumber>
    </recommendedName>
</protein>
<proteinExistence type="inferred from homology"/>
<name>ASTE_SHEPC</name>
<reference key="1">
    <citation type="submission" date="2007-04" db="EMBL/GenBank/DDBJ databases">
        <title>Complete sequence of Shewanella putrefaciens CN-32.</title>
        <authorList>
            <consortium name="US DOE Joint Genome Institute"/>
            <person name="Copeland A."/>
            <person name="Lucas S."/>
            <person name="Lapidus A."/>
            <person name="Barry K."/>
            <person name="Detter J.C."/>
            <person name="Glavina del Rio T."/>
            <person name="Hammon N."/>
            <person name="Israni S."/>
            <person name="Dalin E."/>
            <person name="Tice H."/>
            <person name="Pitluck S."/>
            <person name="Chain P."/>
            <person name="Malfatti S."/>
            <person name="Shin M."/>
            <person name="Vergez L."/>
            <person name="Schmutz J."/>
            <person name="Larimer F."/>
            <person name="Land M."/>
            <person name="Hauser L."/>
            <person name="Kyrpides N."/>
            <person name="Mikhailova N."/>
            <person name="Romine M.F."/>
            <person name="Fredrickson J."/>
            <person name="Tiedje J."/>
            <person name="Richardson P."/>
        </authorList>
    </citation>
    <scope>NUCLEOTIDE SEQUENCE [LARGE SCALE GENOMIC DNA]</scope>
    <source>
        <strain>CN-32 / ATCC BAA-453</strain>
    </source>
</reference>
<comment type="function">
    <text evidence="1">Transforms N(2)-succinylglutamate into succinate and glutamate.</text>
</comment>
<comment type="catalytic activity">
    <reaction evidence="1">
        <text>N-succinyl-L-glutamate + H2O = L-glutamate + succinate</text>
        <dbReference type="Rhea" id="RHEA:15169"/>
        <dbReference type="ChEBI" id="CHEBI:15377"/>
        <dbReference type="ChEBI" id="CHEBI:29985"/>
        <dbReference type="ChEBI" id="CHEBI:30031"/>
        <dbReference type="ChEBI" id="CHEBI:58763"/>
        <dbReference type="EC" id="3.5.1.96"/>
    </reaction>
</comment>
<comment type="cofactor">
    <cofactor evidence="1">
        <name>Zn(2+)</name>
        <dbReference type="ChEBI" id="CHEBI:29105"/>
    </cofactor>
    <text evidence="1">Binds 1 zinc ion per subunit.</text>
</comment>
<comment type="pathway">
    <text evidence="1">Amino-acid degradation; L-arginine degradation via AST pathway; L-glutamate and succinate from L-arginine: step 5/5.</text>
</comment>
<comment type="similarity">
    <text evidence="1">Belongs to the AspA/AstE family. Succinylglutamate desuccinylase subfamily.</text>
</comment>